<sequence>MALQTPVLSPATPTVMAESALYRQRLEVIAEKRRLQEEIGAARRELEEEKLRVERLKRKSLRERWLMDGAAEGPERPEEPASKDPQSPEGQAQARIRNLEDSLFSLQSQLQLLQSASTGAQHRPAGRPAWRREGPRPLSQSAMEAAPTAPTDVDKRTSLPDAPVGMSPESPSDPREESIAVLPASRPSTEAIGTSSEANGPCPGHSPLPEQLSLGVSSVTKAKGDGAVEVVWAGLRATENSATGPTDVELEAKVEEVVLEAIGARQGTSSPELPTWVKEGRGVVEVVWEGLGGRDLDVTGESGRDAEATHTSSRRLQEQFEAETCRKEEGASRDSLEGVGQGGPGVEEGSFIWVERVALSEDWEEILMEGLEAPQGAGSAGEPEALIGAQPRGGEASWEVEKREVEKVEGIEEKGRAEKLGAEREDGVAVLPDETQGREENEAEKVERKDSEGPFPAEIATDEEKWEVKTTEGEESLEVEKGGEAEPVTTEKPLVTEKKPEGSLETERKGSEMPLDQEKDGEGSLDRESKTTEILLDGEIGDKSSLDETKGSKKLLDEKTGGEGSLDEEAEGSKKLLDREADGIEPFSEVDKTSGAKDDVSPEEQGKANEGAEFQAEDASPPGATVCVQDEPRSEEQGQQEPEKQEGLVEGAASKPEPCTEREGPPGDATLLLAETPAPEQPVESQPLLHQEASSTNPGDHPAPTYAPAQQLELAEAKEASGPKQKTCQCCVVM</sequence>
<evidence type="ECO:0000250" key="1"/>
<evidence type="ECO:0000250" key="2">
    <source>
        <dbReference type="UniProtKB" id="A6NDB9"/>
    </source>
</evidence>
<evidence type="ECO:0000255" key="3"/>
<evidence type="ECO:0000256" key="4">
    <source>
        <dbReference type="SAM" id="MobiDB-lite"/>
    </source>
</evidence>
<evidence type="ECO:0000305" key="5"/>
<evidence type="ECO:0007744" key="6">
    <source>
    </source>
</evidence>
<dbReference type="EMBL" id="EF208034">
    <property type="protein sequence ID" value="ABM92364.1"/>
    <property type="molecule type" value="mRNA"/>
</dbReference>
<dbReference type="EMBL" id="AK014493">
    <property type="protein sequence ID" value="BAB29393.3"/>
    <property type="status" value="ALT_SEQ"/>
    <property type="molecule type" value="mRNA"/>
</dbReference>
<dbReference type="CCDS" id="CCDS40405.1"/>
<dbReference type="RefSeq" id="NP_083153.1">
    <property type="nucleotide sequence ID" value="NM_028877.2"/>
</dbReference>
<dbReference type="SMR" id="A2TJV2"/>
<dbReference type="BioGRID" id="216674">
    <property type="interactions" value="2"/>
</dbReference>
<dbReference type="FunCoup" id="A2TJV2">
    <property type="interactions" value="2"/>
</dbReference>
<dbReference type="STRING" id="10090.ENSMUSP00000051396"/>
<dbReference type="GlyGen" id="A2TJV2">
    <property type="glycosylation" value="2 sites"/>
</dbReference>
<dbReference type="iPTMnet" id="A2TJV2"/>
<dbReference type="PhosphoSitePlus" id="A2TJV2"/>
<dbReference type="SwissPalm" id="A2TJV2"/>
<dbReference type="jPOST" id="A2TJV2"/>
<dbReference type="PaxDb" id="10090-ENSMUSP00000051396"/>
<dbReference type="PeptideAtlas" id="A2TJV2"/>
<dbReference type="ProteomicsDB" id="294377"/>
<dbReference type="Antibodypedia" id="57000">
    <property type="antibodies" value="90 antibodies from 20 providers"/>
</dbReference>
<dbReference type="Ensembl" id="ENSMUST00000055077.7">
    <property type="protein sequence ID" value="ENSMUSP00000051396.7"/>
    <property type="gene ID" value="ENSMUSG00000047986.13"/>
</dbReference>
<dbReference type="GeneID" id="74337"/>
<dbReference type="KEGG" id="mmu:74337"/>
<dbReference type="UCSC" id="uc009mlq.1">
    <property type="organism name" value="mouse"/>
</dbReference>
<dbReference type="AGR" id="MGI:1921587"/>
<dbReference type="CTD" id="342979"/>
<dbReference type="MGI" id="MGI:1921587">
    <property type="gene designation" value="Palm3"/>
</dbReference>
<dbReference type="VEuPathDB" id="HostDB:ENSMUSG00000047986"/>
<dbReference type="eggNOG" id="ENOG502S32R">
    <property type="taxonomic scope" value="Eukaryota"/>
</dbReference>
<dbReference type="GeneTree" id="ENSGT00390000009016"/>
<dbReference type="HOGENOM" id="CLU_401664_0_0_1"/>
<dbReference type="InParanoid" id="A2TJV2"/>
<dbReference type="OMA" id="DWEELLM"/>
<dbReference type="OrthoDB" id="9838391at2759"/>
<dbReference type="PhylomeDB" id="A2TJV2"/>
<dbReference type="TreeFam" id="TF337206"/>
<dbReference type="BioGRID-ORCS" id="74337">
    <property type="hits" value="2 hits in 76 CRISPR screens"/>
</dbReference>
<dbReference type="PRO" id="PR:A2TJV2"/>
<dbReference type="Proteomes" id="UP000000589">
    <property type="component" value="Chromosome 8"/>
</dbReference>
<dbReference type="RNAct" id="A2TJV2">
    <property type="molecule type" value="protein"/>
</dbReference>
<dbReference type="Bgee" id="ENSMUSG00000047986">
    <property type="expression patterns" value="Expressed in yolk sac and 73 other cell types or tissues"/>
</dbReference>
<dbReference type="GO" id="GO:0005737">
    <property type="term" value="C:cytoplasm"/>
    <property type="evidence" value="ECO:0007669"/>
    <property type="project" value="UniProtKB-SubCell"/>
</dbReference>
<dbReference type="GO" id="GO:0005886">
    <property type="term" value="C:plasma membrane"/>
    <property type="evidence" value="ECO:0007669"/>
    <property type="project" value="UniProtKB-SubCell"/>
</dbReference>
<dbReference type="GO" id="GO:0005524">
    <property type="term" value="F:ATP binding"/>
    <property type="evidence" value="ECO:0007669"/>
    <property type="project" value="UniProtKB-KW"/>
</dbReference>
<dbReference type="GO" id="GO:0008360">
    <property type="term" value="P:regulation of cell shape"/>
    <property type="evidence" value="ECO:0007669"/>
    <property type="project" value="InterPro"/>
</dbReference>
<dbReference type="InterPro" id="IPR004965">
    <property type="entry name" value="Paralemmin"/>
</dbReference>
<dbReference type="InterPro" id="IPR024149">
    <property type="entry name" value="Paralemmin-3"/>
</dbReference>
<dbReference type="PANTHER" id="PTHR47528">
    <property type="entry name" value="PARALEMMIN-3"/>
    <property type="match status" value="1"/>
</dbReference>
<dbReference type="PANTHER" id="PTHR47528:SF1">
    <property type="entry name" value="PARALEMMIN-3"/>
    <property type="match status" value="1"/>
</dbReference>
<dbReference type="Pfam" id="PF03285">
    <property type="entry name" value="Paralemmin"/>
    <property type="match status" value="1"/>
</dbReference>
<accession>A2TJV2</accession>
<accession>Q9CRS0</accession>
<feature type="chain" id="PRO_0000332173" description="Paralemmin-3">
    <location>
        <begin position="1"/>
        <end position="731"/>
    </location>
</feature>
<feature type="propeptide" id="PRO_0000332174" description="Removed in mature form" evidence="1">
    <location>
        <begin position="732"/>
        <end position="734"/>
    </location>
</feature>
<feature type="region of interest" description="Disordered" evidence="4">
    <location>
        <begin position="62"/>
        <end position="100"/>
    </location>
</feature>
<feature type="region of interest" description="Disordered" evidence="4">
    <location>
        <begin position="114"/>
        <end position="217"/>
    </location>
</feature>
<feature type="region of interest" description="Disordered" evidence="4">
    <location>
        <begin position="297"/>
        <end position="347"/>
    </location>
</feature>
<feature type="region of interest" description="Disordered" evidence="4">
    <location>
        <begin position="374"/>
        <end position="400"/>
    </location>
</feature>
<feature type="region of interest" description="Disordered" evidence="4">
    <location>
        <begin position="413"/>
        <end position="709"/>
    </location>
</feature>
<feature type="coiled-coil region" evidence="3">
    <location>
        <begin position="19"/>
        <end position="64"/>
    </location>
</feature>
<feature type="coiled-coil region" evidence="3">
    <location>
        <begin position="90"/>
        <end position="116"/>
    </location>
</feature>
<feature type="compositionally biased region" description="Basic and acidic residues" evidence="4">
    <location>
        <begin position="73"/>
        <end position="82"/>
    </location>
</feature>
<feature type="compositionally biased region" description="Polar residues" evidence="4">
    <location>
        <begin position="186"/>
        <end position="198"/>
    </location>
</feature>
<feature type="compositionally biased region" description="Basic and acidic residues" evidence="4">
    <location>
        <begin position="297"/>
        <end position="308"/>
    </location>
</feature>
<feature type="compositionally biased region" description="Basic and acidic residues" evidence="4">
    <location>
        <begin position="315"/>
        <end position="336"/>
    </location>
</feature>
<feature type="compositionally biased region" description="Basic and acidic residues" evidence="4">
    <location>
        <begin position="413"/>
        <end position="427"/>
    </location>
</feature>
<feature type="compositionally biased region" description="Basic and acidic residues" evidence="4">
    <location>
        <begin position="435"/>
        <end position="452"/>
    </location>
</feature>
<feature type="compositionally biased region" description="Basic and acidic residues" evidence="4">
    <location>
        <begin position="462"/>
        <end position="484"/>
    </location>
</feature>
<feature type="compositionally biased region" description="Basic and acidic residues" evidence="4">
    <location>
        <begin position="494"/>
        <end position="531"/>
    </location>
</feature>
<feature type="compositionally biased region" description="Basic and acidic residues" evidence="4">
    <location>
        <begin position="540"/>
        <end position="561"/>
    </location>
</feature>
<feature type="compositionally biased region" description="Basic and acidic residues" evidence="4">
    <location>
        <begin position="571"/>
        <end position="582"/>
    </location>
</feature>
<feature type="compositionally biased region" description="Basic and acidic residues" evidence="4">
    <location>
        <begin position="589"/>
        <end position="607"/>
    </location>
</feature>
<feature type="compositionally biased region" description="Basic and acidic residues" evidence="4">
    <location>
        <begin position="630"/>
        <end position="647"/>
    </location>
</feature>
<feature type="modified residue" description="Phosphoserine" evidence="2">
    <location>
        <position position="139"/>
    </location>
</feature>
<feature type="modified residue" description="Phosphoserine" evidence="2">
    <location>
        <position position="158"/>
    </location>
</feature>
<feature type="modified residue" description="Phosphoserine" evidence="6">
    <location>
        <position position="167"/>
    </location>
</feature>
<feature type="modified residue" description="Phosphoserine" evidence="2">
    <location>
        <position position="170"/>
    </location>
</feature>
<feature type="modified residue" description="Phosphoserine" evidence="2">
    <location>
        <position position="172"/>
    </location>
</feature>
<feature type="modified residue" description="Phosphoserine" evidence="6">
    <location>
        <position position="270"/>
    </location>
</feature>
<feature type="modified residue" description="Phosphothreonine" evidence="2">
    <location>
        <position position="311"/>
    </location>
</feature>
<feature type="modified residue" description="Phosphoserine" evidence="6">
    <location>
        <position position="332"/>
    </location>
</feature>
<feature type="modified residue" description="Phosphoserine" evidence="6">
    <location>
        <position position="335"/>
    </location>
</feature>
<feature type="modified residue" description="Phosphoserine" evidence="6">
    <location>
        <position position="451"/>
    </location>
</feature>
<feature type="modified residue" description="Phosphoserine" evidence="6">
    <location>
        <position position="601"/>
    </location>
</feature>
<feature type="modified residue" description="Phosphoserine" evidence="2">
    <location>
        <position position="721"/>
    </location>
</feature>
<feature type="modified residue" description="Cysteine methyl ester" evidence="1">
    <location>
        <position position="731"/>
    </location>
</feature>
<feature type="lipid moiety-binding region" description="S-palmitoyl cysteine" evidence="1">
    <location>
        <position position="728"/>
    </location>
</feature>
<feature type="lipid moiety-binding region" description="S-palmitoyl cysteine" evidence="1">
    <location>
        <position position="730"/>
    </location>
</feature>
<feature type="lipid moiety-binding region" description="S-farnesyl cysteine" evidence="1">
    <location>
        <position position="731"/>
    </location>
</feature>
<comment type="function">
    <text evidence="1">ATP-binding protein, which may act as a adapter in the Toll-like receptor (TLR) signaling.</text>
</comment>
<comment type="subunit">
    <text evidence="1">Interacts with SIGIRR.</text>
</comment>
<comment type="subcellular location">
    <subcellularLocation>
        <location evidence="1">Cytoplasm</location>
    </subcellularLocation>
    <subcellularLocation>
        <location evidence="1">Cell membrane</location>
        <topology evidence="1">Lipid-anchor</topology>
    </subcellularLocation>
</comment>
<comment type="PTM">
    <text evidence="1">Palmitoylated on Cys-728 and Cys-730 and prenylated on Cys-731; which is required for membrane association.</text>
</comment>
<comment type="similarity">
    <text evidence="5">Belongs to the paralemmin family.</text>
</comment>
<comment type="sequence caution" evidence="5">
    <conflict type="erroneous initiation">
        <sequence resource="EMBL-CDS" id="BAB29393"/>
    </conflict>
    <text>Truncated N-terminus.</text>
</comment>
<comment type="sequence caution" evidence="5">
    <conflict type="miscellaneous discrepancy">
        <sequence resource="EMBL-CDS" id="BAB29393"/>
    </conflict>
    <text>Intron retention.</text>
</comment>
<name>PALM3_MOUSE</name>
<protein>
    <recommendedName>
        <fullName>Paralemmin-3</fullName>
    </recommendedName>
</protein>
<reference key="1">
    <citation type="submission" date="2007-01" db="EMBL/GenBank/DDBJ databases">
        <title>Characterization of paralemmin-3, a new isoform of the paralemmin protein family implicated in membrane dynamics.</title>
        <authorList>
            <person name="Hultqvist G."/>
            <person name="Neumann N.G."/>
            <person name="Kilimann M.W."/>
        </authorList>
    </citation>
    <scope>NUCLEOTIDE SEQUENCE [MRNA]</scope>
</reference>
<reference key="2">
    <citation type="journal article" date="2005" name="Science">
        <title>The transcriptional landscape of the mammalian genome.</title>
        <authorList>
            <person name="Carninci P."/>
            <person name="Kasukawa T."/>
            <person name="Katayama S."/>
            <person name="Gough J."/>
            <person name="Frith M.C."/>
            <person name="Maeda N."/>
            <person name="Oyama R."/>
            <person name="Ravasi T."/>
            <person name="Lenhard B."/>
            <person name="Wells C."/>
            <person name="Kodzius R."/>
            <person name="Shimokawa K."/>
            <person name="Bajic V.B."/>
            <person name="Brenner S.E."/>
            <person name="Batalov S."/>
            <person name="Forrest A.R."/>
            <person name="Zavolan M."/>
            <person name="Davis M.J."/>
            <person name="Wilming L.G."/>
            <person name="Aidinis V."/>
            <person name="Allen J.E."/>
            <person name="Ambesi-Impiombato A."/>
            <person name="Apweiler R."/>
            <person name="Aturaliya R.N."/>
            <person name="Bailey T.L."/>
            <person name="Bansal M."/>
            <person name="Baxter L."/>
            <person name="Beisel K.W."/>
            <person name="Bersano T."/>
            <person name="Bono H."/>
            <person name="Chalk A.M."/>
            <person name="Chiu K.P."/>
            <person name="Choudhary V."/>
            <person name="Christoffels A."/>
            <person name="Clutterbuck D.R."/>
            <person name="Crowe M.L."/>
            <person name="Dalla E."/>
            <person name="Dalrymple B.P."/>
            <person name="de Bono B."/>
            <person name="Della Gatta G."/>
            <person name="di Bernardo D."/>
            <person name="Down T."/>
            <person name="Engstrom P."/>
            <person name="Fagiolini M."/>
            <person name="Faulkner G."/>
            <person name="Fletcher C.F."/>
            <person name="Fukushima T."/>
            <person name="Furuno M."/>
            <person name="Futaki S."/>
            <person name="Gariboldi M."/>
            <person name="Georgii-Hemming P."/>
            <person name="Gingeras T.R."/>
            <person name="Gojobori T."/>
            <person name="Green R.E."/>
            <person name="Gustincich S."/>
            <person name="Harbers M."/>
            <person name="Hayashi Y."/>
            <person name="Hensch T.K."/>
            <person name="Hirokawa N."/>
            <person name="Hill D."/>
            <person name="Huminiecki L."/>
            <person name="Iacono M."/>
            <person name="Ikeo K."/>
            <person name="Iwama A."/>
            <person name="Ishikawa T."/>
            <person name="Jakt M."/>
            <person name="Kanapin A."/>
            <person name="Katoh M."/>
            <person name="Kawasawa Y."/>
            <person name="Kelso J."/>
            <person name="Kitamura H."/>
            <person name="Kitano H."/>
            <person name="Kollias G."/>
            <person name="Krishnan S.P."/>
            <person name="Kruger A."/>
            <person name="Kummerfeld S.K."/>
            <person name="Kurochkin I.V."/>
            <person name="Lareau L.F."/>
            <person name="Lazarevic D."/>
            <person name="Lipovich L."/>
            <person name="Liu J."/>
            <person name="Liuni S."/>
            <person name="McWilliam S."/>
            <person name="Madan Babu M."/>
            <person name="Madera M."/>
            <person name="Marchionni L."/>
            <person name="Matsuda H."/>
            <person name="Matsuzawa S."/>
            <person name="Miki H."/>
            <person name="Mignone F."/>
            <person name="Miyake S."/>
            <person name="Morris K."/>
            <person name="Mottagui-Tabar S."/>
            <person name="Mulder N."/>
            <person name="Nakano N."/>
            <person name="Nakauchi H."/>
            <person name="Ng P."/>
            <person name="Nilsson R."/>
            <person name="Nishiguchi S."/>
            <person name="Nishikawa S."/>
            <person name="Nori F."/>
            <person name="Ohara O."/>
            <person name="Okazaki Y."/>
            <person name="Orlando V."/>
            <person name="Pang K.C."/>
            <person name="Pavan W.J."/>
            <person name="Pavesi G."/>
            <person name="Pesole G."/>
            <person name="Petrovsky N."/>
            <person name="Piazza S."/>
            <person name="Reed J."/>
            <person name="Reid J.F."/>
            <person name="Ring B.Z."/>
            <person name="Ringwald M."/>
            <person name="Rost B."/>
            <person name="Ruan Y."/>
            <person name="Salzberg S.L."/>
            <person name="Sandelin A."/>
            <person name="Schneider C."/>
            <person name="Schoenbach C."/>
            <person name="Sekiguchi K."/>
            <person name="Semple C.A."/>
            <person name="Seno S."/>
            <person name="Sessa L."/>
            <person name="Sheng Y."/>
            <person name="Shibata Y."/>
            <person name="Shimada H."/>
            <person name="Shimada K."/>
            <person name="Silva D."/>
            <person name="Sinclair B."/>
            <person name="Sperling S."/>
            <person name="Stupka E."/>
            <person name="Sugiura K."/>
            <person name="Sultana R."/>
            <person name="Takenaka Y."/>
            <person name="Taki K."/>
            <person name="Tammoja K."/>
            <person name="Tan S.L."/>
            <person name="Tang S."/>
            <person name="Taylor M.S."/>
            <person name="Tegner J."/>
            <person name="Teichmann S.A."/>
            <person name="Ueda H.R."/>
            <person name="van Nimwegen E."/>
            <person name="Verardo R."/>
            <person name="Wei C.L."/>
            <person name="Yagi K."/>
            <person name="Yamanishi H."/>
            <person name="Zabarovsky E."/>
            <person name="Zhu S."/>
            <person name="Zimmer A."/>
            <person name="Hide W."/>
            <person name="Bult C."/>
            <person name="Grimmond S.M."/>
            <person name="Teasdale R.D."/>
            <person name="Liu E.T."/>
            <person name="Brusic V."/>
            <person name="Quackenbush J."/>
            <person name="Wahlestedt C."/>
            <person name="Mattick J.S."/>
            <person name="Hume D.A."/>
            <person name="Kai C."/>
            <person name="Sasaki D."/>
            <person name="Tomaru Y."/>
            <person name="Fukuda S."/>
            <person name="Kanamori-Katayama M."/>
            <person name="Suzuki M."/>
            <person name="Aoki J."/>
            <person name="Arakawa T."/>
            <person name="Iida J."/>
            <person name="Imamura K."/>
            <person name="Itoh M."/>
            <person name="Kato T."/>
            <person name="Kawaji H."/>
            <person name="Kawagashira N."/>
            <person name="Kawashima T."/>
            <person name="Kojima M."/>
            <person name="Kondo S."/>
            <person name="Konno H."/>
            <person name="Nakano K."/>
            <person name="Ninomiya N."/>
            <person name="Nishio T."/>
            <person name="Okada M."/>
            <person name="Plessy C."/>
            <person name="Shibata K."/>
            <person name="Shiraki T."/>
            <person name="Suzuki S."/>
            <person name="Tagami M."/>
            <person name="Waki K."/>
            <person name="Watahiki A."/>
            <person name="Okamura-Oho Y."/>
            <person name="Suzuki H."/>
            <person name="Kawai J."/>
            <person name="Hayashizaki Y."/>
        </authorList>
    </citation>
    <scope>NUCLEOTIDE SEQUENCE [LARGE SCALE MRNA] OF 1-442</scope>
    <source>
        <strain>C57BL/6J</strain>
        <tissue>Liver</tissue>
    </source>
</reference>
<reference key="3">
    <citation type="journal article" date="2001" name="Biochem. Biophys. Res. Commun.">
        <title>The paralemmin protein family: identification of paralemmin-2, an isoform differentially spliced to AKAP2/AKAP-KL, and of palmdelphin, a more distant cytosolic relative.</title>
        <authorList>
            <person name="Hu B."/>
            <person name="Copeland N.G."/>
            <person name="Gilbert D.J."/>
            <person name="Jenkins N.A."/>
            <person name="Kilimann M.W."/>
        </authorList>
    </citation>
    <scope>IDENTIFICATION</scope>
</reference>
<reference key="4">
    <citation type="journal article" date="2010" name="Cell">
        <title>A tissue-specific atlas of mouse protein phosphorylation and expression.</title>
        <authorList>
            <person name="Huttlin E.L."/>
            <person name="Jedrychowski M.P."/>
            <person name="Elias J.E."/>
            <person name="Goswami T."/>
            <person name="Rad R."/>
            <person name="Beausoleil S.A."/>
            <person name="Villen J."/>
            <person name="Haas W."/>
            <person name="Sowa M.E."/>
            <person name="Gygi S.P."/>
        </authorList>
    </citation>
    <scope>PHOSPHORYLATION [LARGE SCALE ANALYSIS] AT SER-167; SER-270; SER-332; SER-335; SER-451 AND SER-601</scope>
    <scope>IDENTIFICATION BY MASS SPECTROMETRY [LARGE SCALE ANALYSIS]</scope>
    <source>
        <tissue>Brain</tissue>
        <tissue>Kidney</tissue>
    </source>
</reference>
<keyword id="KW-0067">ATP-binding</keyword>
<keyword id="KW-1003">Cell membrane</keyword>
<keyword id="KW-0175">Coiled coil</keyword>
<keyword id="KW-0963">Cytoplasm</keyword>
<keyword id="KW-0449">Lipoprotein</keyword>
<keyword id="KW-0472">Membrane</keyword>
<keyword id="KW-0488">Methylation</keyword>
<keyword id="KW-0547">Nucleotide-binding</keyword>
<keyword id="KW-0564">Palmitate</keyword>
<keyword id="KW-0597">Phosphoprotein</keyword>
<keyword id="KW-0636">Prenylation</keyword>
<keyword id="KW-1185">Reference proteome</keyword>
<keyword id="KW-0677">Repeat</keyword>
<proteinExistence type="evidence at protein level"/>
<gene>
    <name type="primary">Palm3</name>
</gene>
<organism>
    <name type="scientific">Mus musculus</name>
    <name type="common">Mouse</name>
    <dbReference type="NCBI Taxonomy" id="10090"/>
    <lineage>
        <taxon>Eukaryota</taxon>
        <taxon>Metazoa</taxon>
        <taxon>Chordata</taxon>
        <taxon>Craniata</taxon>
        <taxon>Vertebrata</taxon>
        <taxon>Euteleostomi</taxon>
        <taxon>Mammalia</taxon>
        <taxon>Eutheria</taxon>
        <taxon>Euarchontoglires</taxon>
        <taxon>Glires</taxon>
        <taxon>Rodentia</taxon>
        <taxon>Myomorpha</taxon>
        <taxon>Muroidea</taxon>
        <taxon>Muridae</taxon>
        <taxon>Murinae</taxon>
        <taxon>Mus</taxon>
        <taxon>Mus</taxon>
    </lineage>
</organism>